<sequence length="248" mass="27432">MSFVVIIPARFSSTRLPGKPLVDINGKPMIVHVLERARESGAERIIVATDHEDVARAVEAAGGEVCMTRADHQSGTERLAEVVEKCGFSDDTVIVNVQGDEPMIPAVIIRQVAENLAQRQVGMATLAVPIHSAEEAFNPNAVKVVLDAEGYALYFSRATIPWDRDRFAKSLETVGDTCLRHLGIYGYRAGFIRRYVSWQPSPLEHIEMLEQLRVLWYGEKIHVAVAKAVPGTGVDTADDLERVRAEMR</sequence>
<organism>
    <name type="scientific">Salmonella paratyphi C (strain RKS4594)</name>
    <dbReference type="NCBI Taxonomy" id="476213"/>
    <lineage>
        <taxon>Bacteria</taxon>
        <taxon>Pseudomonadati</taxon>
        <taxon>Pseudomonadota</taxon>
        <taxon>Gammaproteobacteria</taxon>
        <taxon>Enterobacterales</taxon>
        <taxon>Enterobacteriaceae</taxon>
        <taxon>Salmonella</taxon>
    </lineage>
</organism>
<comment type="function">
    <text evidence="1">Activates KDO (a required 8-carbon sugar) for incorporation into bacterial lipopolysaccharide in Gram-negative bacteria.</text>
</comment>
<comment type="catalytic activity">
    <reaction evidence="1">
        <text>3-deoxy-alpha-D-manno-oct-2-ulosonate + CTP = CMP-3-deoxy-beta-D-manno-octulosonate + diphosphate</text>
        <dbReference type="Rhea" id="RHEA:23448"/>
        <dbReference type="ChEBI" id="CHEBI:33019"/>
        <dbReference type="ChEBI" id="CHEBI:37563"/>
        <dbReference type="ChEBI" id="CHEBI:85986"/>
        <dbReference type="ChEBI" id="CHEBI:85987"/>
        <dbReference type="EC" id="2.7.7.38"/>
    </reaction>
</comment>
<comment type="pathway">
    <text evidence="1">Nucleotide-sugar biosynthesis; CMP-3-deoxy-D-manno-octulosonate biosynthesis; CMP-3-deoxy-D-manno-octulosonate from 3-deoxy-D-manno-octulosonate and CTP: step 1/1.</text>
</comment>
<comment type="pathway">
    <text evidence="1">Bacterial outer membrane biogenesis; lipopolysaccharide biosynthesis.</text>
</comment>
<comment type="subcellular location">
    <subcellularLocation>
        <location evidence="1">Cytoplasm</location>
    </subcellularLocation>
</comment>
<comment type="similarity">
    <text evidence="1">Belongs to the KdsB family.</text>
</comment>
<name>KDSB_SALPC</name>
<gene>
    <name evidence="1" type="primary">kdsB</name>
    <name type="ordered locus">SPC_0989</name>
</gene>
<evidence type="ECO:0000255" key="1">
    <source>
        <dbReference type="HAMAP-Rule" id="MF_00057"/>
    </source>
</evidence>
<accession>C0PXV5</accession>
<keyword id="KW-0963">Cytoplasm</keyword>
<keyword id="KW-0448">Lipopolysaccharide biosynthesis</keyword>
<keyword id="KW-0548">Nucleotidyltransferase</keyword>
<keyword id="KW-0808">Transferase</keyword>
<protein>
    <recommendedName>
        <fullName evidence="1">3-deoxy-manno-octulosonate cytidylyltransferase</fullName>
        <ecNumber evidence="1">2.7.7.38</ecNumber>
    </recommendedName>
    <alternativeName>
        <fullName evidence="1">CMP-2-keto-3-deoxyoctulosonic acid synthase</fullName>
        <shortName evidence="1">CKS</shortName>
        <shortName evidence="1">CMP-KDO synthase</shortName>
    </alternativeName>
</protein>
<dbReference type="EC" id="2.7.7.38" evidence="1"/>
<dbReference type="EMBL" id="CP000857">
    <property type="protein sequence ID" value="ACN45155.1"/>
    <property type="molecule type" value="Genomic_DNA"/>
</dbReference>
<dbReference type="RefSeq" id="WP_000011576.1">
    <property type="nucleotide sequence ID" value="NC_012125.1"/>
</dbReference>
<dbReference type="SMR" id="C0PXV5"/>
<dbReference type="KEGG" id="sei:SPC_0989"/>
<dbReference type="HOGENOM" id="CLU_065038_1_0_6"/>
<dbReference type="UniPathway" id="UPA00030"/>
<dbReference type="UniPathway" id="UPA00358">
    <property type="reaction ID" value="UER00476"/>
</dbReference>
<dbReference type="Proteomes" id="UP000001599">
    <property type="component" value="Chromosome"/>
</dbReference>
<dbReference type="GO" id="GO:0005829">
    <property type="term" value="C:cytosol"/>
    <property type="evidence" value="ECO:0007669"/>
    <property type="project" value="TreeGrafter"/>
</dbReference>
<dbReference type="GO" id="GO:0008690">
    <property type="term" value="F:3-deoxy-manno-octulosonate cytidylyltransferase activity"/>
    <property type="evidence" value="ECO:0007669"/>
    <property type="project" value="UniProtKB-UniRule"/>
</dbReference>
<dbReference type="GO" id="GO:0033468">
    <property type="term" value="P:CMP-keto-3-deoxy-D-manno-octulosonic acid biosynthetic process"/>
    <property type="evidence" value="ECO:0007669"/>
    <property type="project" value="UniProtKB-UniRule"/>
</dbReference>
<dbReference type="GO" id="GO:0009103">
    <property type="term" value="P:lipopolysaccharide biosynthetic process"/>
    <property type="evidence" value="ECO:0007669"/>
    <property type="project" value="UniProtKB-UniRule"/>
</dbReference>
<dbReference type="CDD" id="cd02517">
    <property type="entry name" value="CMP-KDO-Synthetase"/>
    <property type="match status" value="1"/>
</dbReference>
<dbReference type="FunFam" id="3.90.550.10:FF:000011">
    <property type="entry name" value="3-deoxy-manno-octulosonate cytidylyltransferase"/>
    <property type="match status" value="1"/>
</dbReference>
<dbReference type="Gene3D" id="3.90.550.10">
    <property type="entry name" value="Spore Coat Polysaccharide Biosynthesis Protein SpsA, Chain A"/>
    <property type="match status" value="1"/>
</dbReference>
<dbReference type="HAMAP" id="MF_00057">
    <property type="entry name" value="KdsB"/>
    <property type="match status" value="1"/>
</dbReference>
<dbReference type="InterPro" id="IPR003329">
    <property type="entry name" value="Cytidylyl_trans"/>
</dbReference>
<dbReference type="InterPro" id="IPR004528">
    <property type="entry name" value="KdsB"/>
</dbReference>
<dbReference type="InterPro" id="IPR029044">
    <property type="entry name" value="Nucleotide-diphossugar_trans"/>
</dbReference>
<dbReference type="NCBIfam" id="TIGR00466">
    <property type="entry name" value="kdsB"/>
    <property type="match status" value="1"/>
</dbReference>
<dbReference type="NCBIfam" id="NF003950">
    <property type="entry name" value="PRK05450.1-3"/>
    <property type="match status" value="1"/>
</dbReference>
<dbReference type="NCBIfam" id="NF003952">
    <property type="entry name" value="PRK05450.1-5"/>
    <property type="match status" value="1"/>
</dbReference>
<dbReference type="NCBIfam" id="NF009905">
    <property type="entry name" value="PRK13368.1"/>
    <property type="match status" value="1"/>
</dbReference>
<dbReference type="PANTHER" id="PTHR42866">
    <property type="entry name" value="3-DEOXY-MANNO-OCTULOSONATE CYTIDYLYLTRANSFERASE"/>
    <property type="match status" value="1"/>
</dbReference>
<dbReference type="PANTHER" id="PTHR42866:SF2">
    <property type="entry name" value="3-DEOXY-MANNO-OCTULOSONATE CYTIDYLYLTRANSFERASE, MITOCHONDRIAL"/>
    <property type="match status" value="1"/>
</dbReference>
<dbReference type="Pfam" id="PF02348">
    <property type="entry name" value="CTP_transf_3"/>
    <property type="match status" value="1"/>
</dbReference>
<dbReference type="SUPFAM" id="SSF53448">
    <property type="entry name" value="Nucleotide-diphospho-sugar transferases"/>
    <property type="match status" value="1"/>
</dbReference>
<proteinExistence type="inferred from homology"/>
<reference key="1">
    <citation type="journal article" date="2009" name="PLoS ONE">
        <title>Salmonella paratyphi C: genetic divergence from Salmonella choleraesuis and pathogenic convergence with Salmonella typhi.</title>
        <authorList>
            <person name="Liu W.-Q."/>
            <person name="Feng Y."/>
            <person name="Wang Y."/>
            <person name="Zou Q.-H."/>
            <person name="Chen F."/>
            <person name="Guo J.-T."/>
            <person name="Peng Y.-H."/>
            <person name="Jin Y."/>
            <person name="Li Y.-G."/>
            <person name="Hu S.-N."/>
            <person name="Johnston R.N."/>
            <person name="Liu G.-R."/>
            <person name="Liu S.-L."/>
        </authorList>
    </citation>
    <scope>NUCLEOTIDE SEQUENCE [LARGE SCALE GENOMIC DNA]</scope>
    <source>
        <strain>RKS4594</strain>
    </source>
</reference>
<feature type="chain" id="PRO_1000117805" description="3-deoxy-manno-octulosonate cytidylyltransferase">
    <location>
        <begin position="1"/>
        <end position="248"/>
    </location>
</feature>